<gene>
    <name evidence="13" type="primary">Tnfrsf14</name>
    <name evidence="10 11" type="synonym">hvem</name>
</gene>
<organism>
    <name type="scientific">Mus musculus</name>
    <name type="common">Mouse</name>
    <dbReference type="NCBI Taxonomy" id="10090"/>
    <lineage>
        <taxon>Eukaryota</taxon>
        <taxon>Metazoa</taxon>
        <taxon>Chordata</taxon>
        <taxon>Craniata</taxon>
        <taxon>Vertebrata</taxon>
        <taxon>Euteleostomi</taxon>
        <taxon>Mammalia</taxon>
        <taxon>Eutheria</taxon>
        <taxon>Euarchontoglires</taxon>
        <taxon>Glires</taxon>
        <taxon>Rodentia</taxon>
        <taxon>Myomorpha</taxon>
        <taxon>Muroidea</taxon>
        <taxon>Muridae</taxon>
        <taxon>Murinae</taxon>
        <taxon>Mus</taxon>
        <taxon>Mus</taxon>
    </lineage>
</organism>
<sequence length="275" mass="30171">MEPLPGWGSAPWSQAPTDNTFRLVPCVFLLNLLQRISAQPSCRQEEFLVGDECCPMCNPGYHVKQVCSEHTGTVCAPCPPQTYTAHANGLSKCLPCGVCDPDMGLLTWQECSSWKDTVCRCIPGYFCENQDGSHCSTCLQHTTCPPGQRVEKRGTHDQDTVCADCLTGTFSLGGTQEECLPWTNCSAFQQEVRRGTNSTDTTCSSQVVYYVVSILLPLVIVGAGIAGFLICTRRHLHTSSVAKELEPFQEQQENTIRFPVTEVGFAETEEETASN</sequence>
<comment type="function">
    <text evidence="1 5 7 8 9">Receptor for four distinct ligands: The TNF superfamily members TNFSF14/LIGHT and homotrimeric LTA/lymphotoxin-alpha and the immunoglobulin superfamily members BTLA and CD160, altogether defining a complex stimulatory and inhibitory signaling network (By similarity). Signals via the TRAF2-TRAF3 E3 ligase pathway to promote immune cell survival and differentiation (PubMed:19915044). Participates in bidirectional cell-cell contact signaling between antigen presenting cells and lymphocytes. In response to ligation of TNFSF14/LIGHT, delivers costimulatory signals to T cells, promoting cell proliferation and effector functions (By similarity). Interacts with CD160 on NK cells, enhancing IFNG production and anti-tumor immune response (PubMed:25711213). In the context of bacterial infection, acts as a signaling receptor on epithelial cells for CD160 from intraepithelial lymphocytes, triggering the production of antimicrobial proteins and pro-inflammatory cytokines (PubMed:22801499). Upon binding to CD160 on activated CD4+ T cells, down-regulates CD28 costimulatory signaling, restricting memory and alloantigen-specific immune response (By similarity). May interact in cis (on the same cell) or in trans (on other cells) with BTLA (PubMed:15568026, PubMed:19915044). In cis interactions, appears to play an immune regulatory role inhibiting in trans interactions in naive T cells to maintain a resting state. In trans interactions, can predominate during adaptive immune response to provide survival signals to effector T cells (PubMed:15568026, PubMed:19915044).</text>
</comment>
<comment type="subunit">
    <text evidence="1 5 6">Interacts with TRAF2, TRAF3 and TRAF5 (By similarity). Interacts (via CRD1/TNFR-Cys 1) with CD160; this interaction is direct (PubMed:18193050). Interacts (via CRD1/TNFR-Cys 1) with BTLA; this interaction is direct (PubMed:15568026).</text>
</comment>
<comment type="subcellular location">
    <subcellularLocation>
        <location evidence="5">Cell membrane</location>
        <topology evidence="1">Single-pass type I membrane protein</topology>
    </subcellularLocation>
</comment>
<comment type="tissue specificity">
    <text evidence="7 8">Expressed at mucosal sites including colon and pulmonary epithelial cells (PubMed:22801499). Expressed in naive T cells (PubMed:19915044).</text>
</comment>
<comment type="domain">
    <text evidence="5">The cysteine rich domain I (CRD1/TNFR-Cys 1) is required for interaction with CD160 and BTLA.</text>
</comment>
<comment type="PTM">
    <text evidence="4">N-glycosylated.</text>
</comment>
<comment type="similarity">
    <text evidence="12">Belongs to the tumor necrosis factor receptor superfamily.</text>
</comment>
<proteinExistence type="evidence at protein level"/>
<feature type="signal peptide" evidence="2">
    <location>
        <begin position="1"/>
        <end position="38"/>
    </location>
</feature>
<feature type="chain" id="PRO_5015098926" description="Tumor necrosis factor receptor superfamily member 14">
    <location>
        <begin position="39"/>
        <end position="275"/>
    </location>
</feature>
<feature type="transmembrane region" description="Helical" evidence="2">
    <location>
        <begin position="211"/>
        <end position="231"/>
    </location>
</feature>
<feature type="repeat" description="TNFR-Cys 1" evidence="3">
    <location>
        <begin position="41"/>
        <end position="75"/>
    </location>
</feature>
<feature type="repeat" description="TNFR-Cys 2" evidence="3">
    <location>
        <begin position="77"/>
        <end position="119"/>
    </location>
</feature>
<feature type="repeat" description="TNFR-Cys 3" evidence="3">
    <location>
        <begin position="120"/>
        <end position="162"/>
    </location>
</feature>
<feature type="glycosylation site" description="N-linked (GlcNAc...) asparagine" evidence="4">
    <location>
        <position position="184"/>
    </location>
</feature>
<feature type="glycosylation site" description="N-linked (GlcNAc...) asparagine" evidence="4">
    <location>
        <position position="197"/>
    </location>
</feature>
<feature type="disulfide bond" evidence="3">
    <location>
        <begin position="42"/>
        <end position="53"/>
    </location>
</feature>
<feature type="disulfide bond" evidence="3">
    <location>
        <begin position="54"/>
        <end position="67"/>
    </location>
</feature>
<feature type="disulfide bond" evidence="3">
    <location>
        <begin position="57"/>
        <end position="75"/>
    </location>
</feature>
<feature type="disulfide bond" evidence="3">
    <location>
        <begin position="78"/>
        <end position="93"/>
    </location>
</feature>
<feature type="disulfide bond" evidence="3">
    <location>
        <begin position="96"/>
        <end position="111"/>
    </location>
</feature>
<feature type="disulfide bond" evidence="3">
    <location>
        <begin position="99"/>
        <end position="119"/>
    </location>
</feature>
<feature type="disulfide bond" evidence="3">
    <location>
        <begin position="121"/>
        <end position="138"/>
    </location>
</feature>
<feature type="disulfide bond" evidence="3">
    <location>
        <begin position="144"/>
        <end position="162"/>
    </location>
</feature>
<feature type="strand" evidence="14">
    <location>
        <begin position="46"/>
        <end position="49"/>
    </location>
</feature>
<feature type="strand" evidence="14">
    <location>
        <begin position="52"/>
        <end position="55"/>
    </location>
</feature>
<feature type="strand" evidence="14">
    <location>
        <begin position="61"/>
        <end position="65"/>
    </location>
</feature>
<feature type="strand" evidence="14">
    <location>
        <begin position="74"/>
        <end position="77"/>
    </location>
</feature>
<feature type="helix" evidence="14">
    <location>
        <begin position="101"/>
        <end position="103"/>
    </location>
</feature>
<feature type="strand" evidence="14">
    <location>
        <begin position="105"/>
        <end position="109"/>
    </location>
</feature>
<feature type="strand" evidence="14">
    <location>
        <begin position="118"/>
        <end position="121"/>
    </location>
</feature>
<protein>
    <recommendedName>
        <fullName>Tumor necrosis factor receptor superfamily member 14</fullName>
    </recommendedName>
    <alternativeName>
        <fullName evidence="10 11">Herpes virus entry mediator A</fullName>
        <shortName evidence="1">Herpesvirus entry mediator A</shortName>
        <shortName evidence="1">HveA</shortName>
    </alternativeName>
    <alternativeName>
        <fullName>Tumor necrosis factor receptor-like 2</fullName>
        <shortName evidence="1">TR2</shortName>
    </alternativeName>
    <cdAntigenName>CD270</cdAntigenName>
</protein>
<name>TNR14_MOUSE</name>
<keyword id="KW-0002">3D-structure</keyword>
<keyword id="KW-1064">Adaptive immunity</keyword>
<keyword id="KW-1003">Cell membrane</keyword>
<keyword id="KW-1015">Disulfide bond</keyword>
<keyword id="KW-0325">Glycoprotein</keyword>
<keyword id="KW-1183">Host cell receptor for virus entry</keyword>
<keyword id="KW-0945">Host-virus interaction</keyword>
<keyword id="KW-0391">Immunity</keyword>
<keyword id="KW-0399">Innate immunity</keyword>
<keyword id="KW-0472">Membrane</keyword>
<keyword id="KW-0597">Phosphoprotein</keyword>
<keyword id="KW-0675">Receptor</keyword>
<keyword id="KW-1185">Reference proteome</keyword>
<keyword id="KW-0677">Repeat</keyword>
<keyword id="KW-0732">Signal</keyword>
<keyword id="KW-0812">Transmembrane</keyword>
<keyword id="KW-1133">Transmembrane helix</keyword>
<evidence type="ECO:0000250" key="1">
    <source>
        <dbReference type="UniProtKB" id="Q92956"/>
    </source>
</evidence>
<evidence type="ECO:0000255" key="2"/>
<evidence type="ECO:0000255" key="3">
    <source>
        <dbReference type="PROSITE-ProRule" id="PRU00206"/>
    </source>
</evidence>
<evidence type="ECO:0000255" key="4">
    <source>
        <dbReference type="PROSITE-ProRule" id="PRU00498"/>
    </source>
</evidence>
<evidence type="ECO:0000269" key="5">
    <source>
    </source>
</evidence>
<evidence type="ECO:0000269" key="6">
    <source>
    </source>
</evidence>
<evidence type="ECO:0000269" key="7">
    <source>
    </source>
</evidence>
<evidence type="ECO:0000269" key="8">
    <source>
    </source>
</evidence>
<evidence type="ECO:0000269" key="9">
    <source>
    </source>
</evidence>
<evidence type="ECO:0000303" key="10">
    <source>
    </source>
</evidence>
<evidence type="ECO:0000303" key="11">
    <source>
    </source>
</evidence>
<evidence type="ECO:0000305" key="12"/>
<evidence type="ECO:0000312" key="13">
    <source>
        <dbReference type="MGI" id="MGI:2675303"/>
    </source>
</evidence>
<evidence type="ECO:0007829" key="14">
    <source>
        <dbReference type="PDB" id="7MSJ"/>
    </source>
</evidence>
<dbReference type="EMBL" id="AY264405">
    <property type="protein sequence ID" value="AAO89081.1"/>
    <property type="molecule type" value="mRNA"/>
</dbReference>
<dbReference type="EMBL" id="BX004788">
    <property type="status" value="NOT_ANNOTATED_CDS"/>
    <property type="molecule type" value="Genomic_DNA"/>
</dbReference>
<dbReference type="CCDS" id="CCDS19017.1"/>
<dbReference type="RefSeq" id="NP_849262.1">
    <property type="nucleotide sequence ID" value="NM_178931.2"/>
</dbReference>
<dbReference type="RefSeq" id="XP_006538894.1">
    <property type="nucleotide sequence ID" value="XM_006538831.4"/>
</dbReference>
<dbReference type="PDB" id="7MSJ">
    <property type="method" value="X-ray"/>
    <property type="resolution" value="2.10 A"/>
    <property type="chains" value="A=39-143"/>
</dbReference>
<dbReference type="PDBsum" id="7MSJ"/>
<dbReference type="SMR" id="Q80WM9"/>
<dbReference type="FunCoup" id="Q80WM9">
    <property type="interactions" value="707"/>
</dbReference>
<dbReference type="IntAct" id="Q80WM9">
    <property type="interactions" value="2"/>
</dbReference>
<dbReference type="STRING" id="10090.ENSMUSP00000116757"/>
<dbReference type="GlyCosmos" id="Q80WM9">
    <property type="glycosylation" value="2 sites, No reported glycans"/>
</dbReference>
<dbReference type="GlyGen" id="Q80WM9">
    <property type="glycosylation" value="2 sites"/>
</dbReference>
<dbReference type="iPTMnet" id="Q80WM9"/>
<dbReference type="PhosphoSitePlus" id="Q80WM9"/>
<dbReference type="PaxDb" id="10090-ENSMUSP00000116757"/>
<dbReference type="ProteomicsDB" id="330725"/>
<dbReference type="Antibodypedia" id="1626">
    <property type="antibodies" value="807 antibodies from 44 providers"/>
</dbReference>
<dbReference type="DNASU" id="230979"/>
<dbReference type="Ensembl" id="ENSMUST00000123514.8">
    <property type="protein sequence ID" value="ENSMUSP00000116757.2"/>
    <property type="gene ID" value="ENSMUSG00000042333.17"/>
</dbReference>
<dbReference type="GeneID" id="230979"/>
<dbReference type="KEGG" id="mmu:230979"/>
<dbReference type="UCSC" id="uc008wcj.1">
    <property type="organism name" value="mouse"/>
</dbReference>
<dbReference type="AGR" id="MGI:2675303"/>
<dbReference type="CTD" id="8764"/>
<dbReference type="MGI" id="MGI:2675303">
    <property type="gene designation" value="Tnfrsf14"/>
</dbReference>
<dbReference type="VEuPathDB" id="HostDB:ENSMUSG00000042333"/>
<dbReference type="eggNOG" id="ENOG502S1XZ">
    <property type="taxonomic scope" value="Eukaryota"/>
</dbReference>
<dbReference type="GeneTree" id="ENSGT00940000162427"/>
<dbReference type="HOGENOM" id="CLU_052667_2_0_1"/>
<dbReference type="InParanoid" id="Q80WM9"/>
<dbReference type="OMA" id="LPWTRCS"/>
<dbReference type="OrthoDB" id="10031141at2759"/>
<dbReference type="PhylomeDB" id="Q80WM9"/>
<dbReference type="TreeFam" id="TF331157"/>
<dbReference type="Reactome" id="R-MMU-5669034">
    <property type="pathway name" value="TNFs bind their physiological receptors"/>
</dbReference>
<dbReference type="Reactome" id="R-MMU-9927353">
    <property type="pathway name" value="Co-inhibition by BTLA"/>
</dbReference>
<dbReference type="BioGRID-ORCS" id="230979">
    <property type="hits" value="4 hits in 81 CRISPR screens"/>
</dbReference>
<dbReference type="ChiTaRS" id="Tnfrsf14">
    <property type="organism name" value="mouse"/>
</dbReference>
<dbReference type="PRO" id="PR:Q80WM9"/>
<dbReference type="Proteomes" id="UP000000589">
    <property type="component" value="Chromosome 4"/>
</dbReference>
<dbReference type="Bgee" id="ENSMUSG00000042333">
    <property type="expression patterns" value="Expressed in granulocyte and 55 other cell types or tissues"/>
</dbReference>
<dbReference type="ExpressionAtlas" id="Q80WM9">
    <property type="expression patterns" value="baseline and differential"/>
</dbReference>
<dbReference type="GO" id="GO:0009897">
    <property type="term" value="C:external side of plasma membrane"/>
    <property type="evidence" value="ECO:0000314"/>
    <property type="project" value="MGI"/>
</dbReference>
<dbReference type="GO" id="GO:0005886">
    <property type="term" value="C:plasma membrane"/>
    <property type="evidence" value="ECO:0000304"/>
    <property type="project" value="Reactome"/>
</dbReference>
<dbReference type="GO" id="GO:0001618">
    <property type="term" value="F:virus receptor activity"/>
    <property type="evidence" value="ECO:0007669"/>
    <property type="project" value="UniProtKB-KW"/>
</dbReference>
<dbReference type="GO" id="GO:0002250">
    <property type="term" value="P:adaptive immune response"/>
    <property type="evidence" value="ECO:0007669"/>
    <property type="project" value="UniProtKB-KW"/>
</dbReference>
<dbReference type="GO" id="GO:0035739">
    <property type="term" value="P:CD4-positive, alpha-beta T cell proliferation"/>
    <property type="evidence" value="ECO:0000314"/>
    <property type="project" value="MGI"/>
</dbReference>
<dbReference type="GO" id="GO:0050829">
    <property type="term" value="P:defense response to Gram-negative bacterium"/>
    <property type="evidence" value="ECO:0000315"/>
    <property type="project" value="MGI"/>
</dbReference>
<dbReference type="GO" id="GO:0050830">
    <property type="term" value="P:defense response to Gram-positive bacterium"/>
    <property type="evidence" value="ECO:0000315"/>
    <property type="project" value="MGI"/>
</dbReference>
<dbReference type="GO" id="GO:0045087">
    <property type="term" value="P:innate immune response"/>
    <property type="evidence" value="ECO:0007669"/>
    <property type="project" value="UniProtKB-KW"/>
</dbReference>
<dbReference type="GO" id="GO:2000562">
    <property type="term" value="P:negative regulation of CD4-positive, alpha-beta T cell proliferation"/>
    <property type="evidence" value="ECO:0000314"/>
    <property type="project" value="MGI"/>
</dbReference>
<dbReference type="GO" id="GO:0002720">
    <property type="term" value="P:positive regulation of cytokine production involved in immune response"/>
    <property type="evidence" value="ECO:0000315"/>
    <property type="project" value="MGI"/>
</dbReference>
<dbReference type="GO" id="GO:2000406">
    <property type="term" value="P:positive regulation of T cell migration"/>
    <property type="evidence" value="ECO:0000315"/>
    <property type="project" value="MGI"/>
</dbReference>
<dbReference type="GO" id="GO:0072678">
    <property type="term" value="P:T cell migration"/>
    <property type="evidence" value="ECO:0000315"/>
    <property type="project" value="MGI"/>
</dbReference>
<dbReference type="CDD" id="cd10582">
    <property type="entry name" value="TNFRSF14"/>
    <property type="match status" value="1"/>
</dbReference>
<dbReference type="FunFam" id="2.10.50.10:FF:000007">
    <property type="entry name" value="TNF receptor superfamily member 14"/>
    <property type="match status" value="1"/>
</dbReference>
<dbReference type="FunFam" id="2.10.50.10:FF:000065">
    <property type="entry name" value="TNF receptor superfamily member 14"/>
    <property type="match status" value="1"/>
</dbReference>
<dbReference type="FunFam" id="2.10.50.10:FF:000009">
    <property type="entry name" value="Tumor necrosis factor receptor superfamily member 14"/>
    <property type="match status" value="1"/>
</dbReference>
<dbReference type="Gene3D" id="2.10.50.10">
    <property type="entry name" value="Tumor Necrosis Factor Receptor, subunit A, domain 2"/>
    <property type="match status" value="3"/>
</dbReference>
<dbReference type="InterPro" id="IPR001368">
    <property type="entry name" value="TNFR/NGFR_Cys_rich_reg"/>
</dbReference>
<dbReference type="InterPro" id="IPR022332">
    <property type="entry name" value="TNFR_14"/>
</dbReference>
<dbReference type="InterPro" id="IPR034031">
    <property type="entry name" value="TNFRSF14/UL144_N"/>
</dbReference>
<dbReference type="PANTHER" id="PTHR46838">
    <property type="entry name" value="TUMOR NECROSIS FACTOR RECEPTOR SUPERFAMILY MEMBER 14"/>
    <property type="match status" value="1"/>
</dbReference>
<dbReference type="PANTHER" id="PTHR46838:SF1">
    <property type="entry name" value="TUMOR NECROSIS FACTOR RECEPTOR SUPERFAMILY MEMBER 14"/>
    <property type="match status" value="1"/>
</dbReference>
<dbReference type="Pfam" id="PF00020">
    <property type="entry name" value="TNFR_c6"/>
    <property type="match status" value="3"/>
</dbReference>
<dbReference type="PRINTS" id="PR01965">
    <property type="entry name" value="TNFACTORR14"/>
</dbReference>
<dbReference type="SMART" id="SM00208">
    <property type="entry name" value="TNFR"/>
    <property type="match status" value="4"/>
</dbReference>
<dbReference type="SUPFAM" id="SSF57586">
    <property type="entry name" value="TNF receptor-like"/>
    <property type="match status" value="3"/>
</dbReference>
<dbReference type="PROSITE" id="PS00652">
    <property type="entry name" value="TNFR_NGFR_1"/>
    <property type="match status" value="1"/>
</dbReference>
<dbReference type="PROSITE" id="PS50050">
    <property type="entry name" value="TNFR_NGFR_2"/>
    <property type="match status" value="3"/>
</dbReference>
<accession>Q80WM9</accession>
<reference key="1">
    <citation type="submission" date="2003-03" db="EMBL/GenBank/DDBJ databases">
        <title>Light regulation in a murine model of ovarian carcinoma.</title>
        <authorList>
            <person name="Benencia F."/>
            <person name="Conejo-Garcia J.R."/>
            <person name="Courreges M.C."/>
            <person name="Coukos G."/>
        </authorList>
    </citation>
    <scope>NUCLEOTIDE SEQUENCE [MRNA]</scope>
    <source>
        <strain>C57BL/6J</strain>
        <tissue>Thymus</tissue>
    </source>
</reference>
<reference key="2">
    <citation type="journal article" date="2009" name="PLoS Biol.">
        <title>Lineage-specific biology revealed by a finished genome assembly of the mouse.</title>
        <authorList>
            <person name="Church D.M."/>
            <person name="Goodstadt L."/>
            <person name="Hillier L.W."/>
            <person name="Zody M.C."/>
            <person name="Goldstein S."/>
            <person name="She X."/>
            <person name="Bult C.J."/>
            <person name="Agarwala R."/>
            <person name="Cherry J.L."/>
            <person name="DiCuccio M."/>
            <person name="Hlavina W."/>
            <person name="Kapustin Y."/>
            <person name="Meric P."/>
            <person name="Maglott D."/>
            <person name="Birtle Z."/>
            <person name="Marques A.C."/>
            <person name="Graves T."/>
            <person name="Zhou S."/>
            <person name="Teague B."/>
            <person name="Potamousis K."/>
            <person name="Churas C."/>
            <person name="Place M."/>
            <person name="Herschleb J."/>
            <person name="Runnheim R."/>
            <person name="Forrest D."/>
            <person name="Amos-Landgraf J."/>
            <person name="Schwartz D.C."/>
            <person name="Cheng Z."/>
            <person name="Lindblad-Toh K."/>
            <person name="Eichler E.E."/>
            <person name="Ponting C.P."/>
        </authorList>
    </citation>
    <scope>NUCLEOTIDE SEQUENCE [LARGE SCALE GENOMIC DNA]</scope>
    <source>
        <strain>C57BL/6J</strain>
    </source>
</reference>
<reference key="3">
    <citation type="journal article" date="2005" name="Nat. Immunol.">
        <title>B and T lymphocyte attenuator regulates T cell activation through interaction with herpesvirus entry mediator.</title>
        <authorList>
            <person name="Sedy J.R."/>
            <person name="Gavrieli M."/>
            <person name="Potter K.G."/>
            <person name="Hurchla M.A."/>
            <person name="Lindsley R.C."/>
            <person name="Hildner K."/>
            <person name="Scheu S."/>
            <person name="Pfeffer K."/>
            <person name="Ware C.F."/>
            <person name="Murphy T.L."/>
            <person name="Murphy K.M."/>
        </authorList>
    </citation>
    <scope>FUNCTION</scope>
    <scope>SUBCELLULAR LOCATION</scope>
    <scope>SUBUNIT</scope>
    <scope>INTERACTION WITH BTLA</scope>
    <scope>DOMAIN</scope>
</reference>
<reference key="4">
    <citation type="journal article" date="2008" name="Nat. Immunol.">
        <title>CD160 inhibits activation of human CD4+ T cells through interaction with herpesvirus entry mediator.</title>
        <authorList>
            <person name="Cai G."/>
            <person name="Anumanthan A."/>
            <person name="Brown J.A."/>
            <person name="Greenfield E.A."/>
            <person name="Zhu B."/>
            <person name="Freeman G.J."/>
        </authorList>
    </citation>
    <scope>SUBUNIT</scope>
    <scope>INTERACTION WITH CD160</scope>
</reference>
<reference key="5">
    <citation type="journal article" date="2009" name="J. Immunol.">
        <title>T cell intrinsic heterodimeric complexes between HVEM and BTLA determine receptivity to the surrounding microenvironment.</title>
        <authorList>
            <person name="Cheung T.C."/>
            <person name="Oborne L.M."/>
            <person name="Steinberg M.W."/>
            <person name="Macauley M.G."/>
            <person name="Fukuyama S."/>
            <person name="Sanjo H."/>
            <person name="D'Souza C."/>
            <person name="Norris P.S."/>
            <person name="Pfeffer K."/>
            <person name="Murphy K.M."/>
            <person name="Kronenberg M."/>
            <person name="Spear P.G."/>
            <person name="Ware C.F."/>
        </authorList>
    </citation>
    <scope>FUNCTION</scope>
    <scope>TISSUE SPECIFICITY</scope>
</reference>
<reference key="6">
    <citation type="journal article" date="2012" name="Nature">
        <title>HVEM signalling at mucosal barriers provides host defence against pathogenic bacteria.</title>
        <authorList>
            <person name="Shui J.W."/>
            <person name="Larange A."/>
            <person name="Kim G."/>
            <person name="Vela J.L."/>
            <person name="Zahner S."/>
            <person name="Cheroutre H."/>
            <person name="Kronenberg M."/>
        </authorList>
    </citation>
    <scope>FUNCTION</scope>
    <scope>TISSUE SPECIFICITY</scope>
</reference>
<reference key="7">
    <citation type="journal article" date="2015" name="J. Exp. Med.">
        <title>CD160 is essential for NK-mediated IFN-gamma production.</title>
        <authorList>
            <person name="Tu T.C."/>
            <person name="Brown N.K."/>
            <person name="Kim T.J."/>
            <person name="Wroblewska J."/>
            <person name="Yang X."/>
            <person name="Guo X."/>
            <person name="Lee S.H."/>
            <person name="Kumar V."/>
            <person name="Lee K.M."/>
            <person name="Fu Y.X."/>
        </authorList>
    </citation>
    <scope>FUNCTION</scope>
</reference>